<name>RS20_HAHCH</name>
<proteinExistence type="inferred from homology"/>
<accession>Q2S9T5</accession>
<feature type="chain" id="PRO_0000236436" description="Small ribosomal subunit protein bS20">
    <location>
        <begin position="1"/>
        <end position="89"/>
    </location>
</feature>
<comment type="function">
    <text evidence="1">Binds directly to 16S ribosomal RNA.</text>
</comment>
<comment type="similarity">
    <text evidence="1">Belongs to the bacterial ribosomal protein bS20 family.</text>
</comment>
<organism>
    <name type="scientific">Hahella chejuensis (strain KCTC 2396)</name>
    <dbReference type="NCBI Taxonomy" id="349521"/>
    <lineage>
        <taxon>Bacteria</taxon>
        <taxon>Pseudomonadati</taxon>
        <taxon>Pseudomonadota</taxon>
        <taxon>Gammaproteobacteria</taxon>
        <taxon>Oceanospirillales</taxon>
        <taxon>Hahellaceae</taxon>
        <taxon>Hahella</taxon>
    </lineage>
</organism>
<sequence>MANNPSSKKRARQQVKRRAHNMSLRSMVRTYIKKVSAQIEQGSYDGATQALTTAAPIIDSMVNKGIFSKNKAARTKSRLNAKIKALKAS</sequence>
<evidence type="ECO:0000255" key="1">
    <source>
        <dbReference type="HAMAP-Rule" id="MF_00500"/>
    </source>
</evidence>
<evidence type="ECO:0000305" key="2"/>
<protein>
    <recommendedName>
        <fullName evidence="1">Small ribosomal subunit protein bS20</fullName>
    </recommendedName>
    <alternativeName>
        <fullName evidence="2">30S ribosomal protein S20</fullName>
    </alternativeName>
</protein>
<dbReference type="EMBL" id="CP000155">
    <property type="protein sequence ID" value="ABC32589.1"/>
    <property type="molecule type" value="Genomic_DNA"/>
</dbReference>
<dbReference type="RefSeq" id="WP_011399647.1">
    <property type="nucleotide sequence ID" value="NC_007645.1"/>
</dbReference>
<dbReference type="SMR" id="Q2S9T5"/>
<dbReference type="STRING" id="349521.HCH_05937"/>
<dbReference type="KEGG" id="hch:HCH_05937"/>
<dbReference type="eggNOG" id="COG0268">
    <property type="taxonomic scope" value="Bacteria"/>
</dbReference>
<dbReference type="HOGENOM" id="CLU_160655_4_0_6"/>
<dbReference type="OrthoDB" id="9807974at2"/>
<dbReference type="Proteomes" id="UP000000238">
    <property type="component" value="Chromosome"/>
</dbReference>
<dbReference type="GO" id="GO:0005829">
    <property type="term" value="C:cytosol"/>
    <property type="evidence" value="ECO:0007669"/>
    <property type="project" value="TreeGrafter"/>
</dbReference>
<dbReference type="GO" id="GO:0015935">
    <property type="term" value="C:small ribosomal subunit"/>
    <property type="evidence" value="ECO:0007669"/>
    <property type="project" value="TreeGrafter"/>
</dbReference>
<dbReference type="GO" id="GO:0070181">
    <property type="term" value="F:small ribosomal subunit rRNA binding"/>
    <property type="evidence" value="ECO:0007669"/>
    <property type="project" value="TreeGrafter"/>
</dbReference>
<dbReference type="GO" id="GO:0003735">
    <property type="term" value="F:structural constituent of ribosome"/>
    <property type="evidence" value="ECO:0007669"/>
    <property type="project" value="InterPro"/>
</dbReference>
<dbReference type="GO" id="GO:0006412">
    <property type="term" value="P:translation"/>
    <property type="evidence" value="ECO:0007669"/>
    <property type="project" value="UniProtKB-UniRule"/>
</dbReference>
<dbReference type="FunFam" id="1.20.58.110:FF:000001">
    <property type="entry name" value="30S ribosomal protein S20"/>
    <property type="match status" value="1"/>
</dbReference>
<dbReference type="Gene3D" id="1.20.58.110">
    <property type="entry name" value="Ribosomal protein S20"/>
    <property type="match status" value="1"/>
</dbReference>
<dbReference type="HAMAP" id="MF_00500">
    <property type="entry name" value="Ribosomal_bS20"/>
    <property type="match status" value="1"/>
</dbReference>
<dbReference type="InterPro" id="IPR002583">
    <property type="entry name" value="Ribosomal_bS20"/>
</dbReference>
<dbReference type="InterPro" id="IPR036510">
    <property type="entry name" value="Ribosomal_bS20_sf"/>
</dbReference>
<dbReference type="NCBIfam" id="TIGR00029">
    <property type="entry name" value="S20"/>
    <property type="match status" value="1"/>
</dbReference>
<dbReference type="PANTHER" id="PTHR33398">
    <property type="entry name" value="30S RIBOSOMAL PROTEIN S20"/>
    <property type="match status" value="1"/>
</dbReference>
<dbReference type="PANTHER" id="PTHR33398:SF1">
    <property type="entry name" value="SMALL RIBOSOMAL SUBUNIT PROTEIN BS20C"/>
    <property type="match status" value="1"/>
</dbReference>
<dbReference type="Pfam" id="PF01649">
    <property type="entry name" value="Ribosomal_S20p"/>
    <property type="match status" value="1"/>
</dbReference>
<dbReference type="SUPFAM" id="SSF46992">
    <property type="entry name" value="Ribosomal protein S20"/>
    <property type="match status" value="1"/>
</dbReference>
<reference key="1">
    <citation type="journal article" date="2005" name="Nucleic Acids Res.">
        <title>Genomic blueprint of Hahella chejuensis, a marine microbe producing an algicidal agent.</title>
        <authorList>
            <person name="Jeong H."/>
            <person name="Yim J.H."/>
            <person name="Lee C."/>
            <person name="Choi S.-H."/>
            <person name="Park Y.K."/>
            <person name="Yoon S.H."/>
            <person name="Hur C.-G."/>
            <person name="Kang H.-Y."/>
            <person name="Kim D."/>
            <person name="Lee H.H."/>
            <person name="Park K.H."/>
            <person name="Park S.-H."/>
            <person name="Park H.-S."/>
            <person name="Lee H.K."/>
            <person name="Oh T.K."/>
            <person name="Kim J.F."/>
        </authorList>
    </citation>
    <scope>NUCLEOTIDE SEQUENCE [LARGE SCALE GENOMIC DNA]</scope>
    <source>
        <strain>KCTC 2396</strain>
    </source>
</reference>
<keyword id="KW-1185">Reference proteome</keyword>
<keyword id="KW-0687">Ribonucleoprotein</keyword>
<keyword id="KW-0689">Ribosomal protein</keyword>
<keyword id="KW-0694">RNA-binding</keyword>
<keyword id="KW-0699">rRNA-binding</keyword>
<gene>
    <name evidence="1" type="primary">rpsT</name>
    <name type="ordered locus">HCH_05937</name>
</gene>